<reference key="1">
    <citation type="submission" date="2007-06" db="EMBL/GenBank/DDBJ databases">
        <title>Complete sequence of Sinorhizobium medicae WSM419 chromosome.</title>
        <authorList>
            <consortium name="US DOE Joint Genome Institute"/>
            <person name="Copeland A."/>
            <person name="Lucas S."/>
            <person name="Lapidus A."/>
            <person name="Barry K."/>
            <person name="Glavina del Rio T."/>
            <person name="Dalin E."/>
            <person name="Tice H."/>
            <person name="Pitluck S."/>
            <person name="Chain P."/>
            <person name="Malfatti S."/>
            <person name="Shin M."/>
            <person name="Vergez L."/>
            <person name="Schmutz J."/>
            <person name="Larimer F."/>
            <person name="Land M."/>
            <person name="Hauser L."/>
            <person name="Kyrpides N."/>
            <person name="Mikhailova N."/>
            <person name="Reeve W.G."/>
            <person name="Richardson P."/>
        </authorList>
    </citation>
    <scope>NUCLEOTIDE SEQUENCE [LARGE SCALE GENOMIC DNA]</scope>
    <source>
        <strain>WSM419</strain>
    </source>
</reference>
<evidence type="ECO:0000250" key="1"/>
<evidence type="ECO:0000255" key="2">
    <source>
        <dbReference type="HAMAP-Rule" id="MF_00047"/>
    </source>
</evidence>
<proteinExistence type="inferred from homology"/>
<sequence>MSSKHVAVLLGGFSSERPVSLSSGTACADALEGEGYRVTRVDVGHDVAAVLQELRPDVVFNALHGPFGEDGTIQGILEYLEIPYTHSGVLASALAMDKAQAKHVAKAAGIPVAEAVVMDRRSFGNQHPMKPPYVVKPVREGSSFGVVIVKEDQSHPPQVITSSDWRYGDRIMVERYVAGREFTCGVMGDVALGVTEIIPQGHAFYDYDSKYVKGGSKHVIPAQVSPNIYQKIQTLALKAHQAIGCRGVSRSDFRFDDRGDGEGELIWLEINTQPGMTPTSLVPEMAQHAGLRFGEFLRWMVEDASCLR</sequence>
<comment type="function">
    <text evidence="2">Cell wall formation.</text>
</comment>
<comment type="catalytic activity">
    <reaction evidence="2">
        <text>2 D-alanine + ATP = D-alanyl-D-alanine + ADP + phosphate + H(+)</text>
        <dbReference type="Rhea" id="RHEA:11224"/>
        <dbReference type="ChEBI" id="CHEBI:15378"/>
        <dbReference type="ChEBI" id="CHEBI:30616"/>
        <dbReference type="ChEBI" id="CHEBI:43474"/>
        <dbReference type="ChEBI" id="CHEBI:57416"/>
        <dbReference type="ChEBI" id="CHEBI:57822"/>
        <dbReference type="ChEBI" id="CHEBI:456216"/>
        <dbReference type="EC" id="6.3.2.4"/>
    </reaction>
</comment>
<comment type="cofactor">
    <cofactor evidence="1">
        <name>Mg(2+)</name>
        <dbReference type="ChEBI" id="CHEBI:18420"/>
    </cofactor>
    <cofactor evidence="1">
        <name>Mn(2+)</name>
        <dbReference type="ChEBI" id="CHEBI:29035"/>
    </cofactor>
    <text evidence="1">Binds 2 magnesium or manganese ions per subunit.</text>
</comment>
<comment type="pathway">
    <text evidence="2">Cell wall biogenesis; peptidoglycan biosynthesis.</text>
</comment>
<comment type="subcellular location">
    <subcellularLocation>
        <location evidence="2">Cytoplasm</location>
    </subcellularLocation>
</comment>
<comment type="similarity">
    <text evidence="2">Belongs to the D-alanine--D-alanine ligase family.</text>
</comment>
<name>DDL_SINMW</name>
<protein>
    <recommendedName>
        <fullName evidence="2">D-alanine--D-alanine ligase</fullName>
        <ecNumber evidence="2">6.3.2.4</ecNumber>
    </recommendedName>
    <alternativeName>
        <fullName evidence="2">D-Ala-D-Ala ligase</fullName>
    </alternativeName>
    <alternativeName>
        <fullName evidence="2">D-alanylalanine synthetase</fullName>
    </alternativeName>
</protein>
<keyword id="KW-0067">ATP-binding</keyword>
<keyword id="KW-0133">Cell shape</keyword>
<keyword id="KW-0961">Cell wall biogenesis/degradation</keyword>
<keyword id="KW-0963">Cytoplasm</keyword>
<keyword id="KW-0436">Ligase</keyword>
<keyword id="KW-0460">Magnesium</keyword>
<keyword id="KW-0464">Manganese</keyword>
<keyword id="KW-0479">Metal-binding</keyword>
<keyword id="KW-0547">Nucleotide-binding</keyword>
<keyword id="KW-0573">Peptidoglycan synthesis</keyword>
<accession>A6UB80</accession>
<gene>
    <name evidence="2" type="primary">ddl</name>
    <name type="ordered locus">Smed_2077</name>
</gene>
<dbReference type="EC" id="6.3.2.4" evidence="2"/>
<dbReference type="EMBL" id="CP000738">
    <property type="protein sequence ID" value="ABR60910.1"/>
    <property type="molecule type" value="Genomic_DNA"/>
</dbReference>
<dbReference type="RefSeq" id="WP_011976207.1">
    <property type="nucleotide sequence ID" value="NC_009636.1"/>
</dbReference>
<dbReference type="RefSeq" id="YP_001327745.1">
    <property type="nucleotide sequence ID" value="NC_009636.1"/>
</dbReference>
<dbReference type="SMR" id="A6UB80"/>
<dbReference type="STRING" id="366394.Smed_2077"/>
<dbReference type="KEGG" id="smd:Smed_2077"/>
<dbReference type="PATRIC" id="fig|366394.8.peg.5235"/>
<dbReference type="eggNOG" id="COG1181">
    <property type="taxonomic scope" value="Bacteria"/>
</dbReference>
<dbReference type="HOGENOM" id="CLU_039268_1_1_5"/>
<dbReference type="OrthoDB" id="9813261at2"/>
<dbReference type="UniPathway" id="UPA00219"/>
<dbReference type="Proteomes" id="UP000001108">
    <property type="component" value="Chromosome"/>
</dbReference>
<dbReference type="GO" id="GO:0005737">
    <property type="term" value="C:cytoplasm"/>
    <property type="evidence" value="ECO:0007669"/>
    <property type="project" value="UniProtKB-SubCell"/>
</dbReference>
<dbReference type="GO" id="GO:0005524">
    <property type="term" value="F:ATP binding"/>
    <property type="evidence" value="ECO:0007669"/>
    <property type="project" value="UniProtKB-KW"/>
</dbReference>
<dbReference type="GO" id="GO:0008716">
    <property type="term" value="F:D-alanine-D-alanine ligase activity"/>
    <property type="evidence" value="ECO:0007669"/>
    <property type="project" value="UniProtKB-UniRule"/>
</dbReference>
<dbReference type="GO" id="GO:0046872">
    <property type="term" value="F:metal ion binding"/>
    <property type="evidence" value="ECO:0007669"/>
    <property type="project" value="UniProtKB-KW"/>
</dbReference>
<dbReference type="GO" id="GO:0071555">
    <property type="term" value="P:cell wall organization"/>
    <property type="evidence" value="ECO:0007669"/>
    <property type="project" value="UniProtKB-KW"/>
</dbReference>
<dbReference type="GO" id="GO:0009252">
    <property type="term" value="P:peptidoglycan biosynthetic process"/>
    <property type="evidence" value="ECO:0007669"/>
    <property type="project" value="UniProtKB-UniRule"/>
</dbReference>
<dbReference type="GO" id="GO:0008360">
    <property type="term" value="P:regulation of cell shape"/>
    <property type="evidence" value="ECO:0007669"/>
    <property type="project" value="UniProtKB-KW"/>
</dbReference>
<dbReference type="Gene3D" id="3.40.50.20">
    <property type="match status" value="1"/>
</dbReference>
<dbReference type="Gene3D" id="3.30.1490.20">
    <property type="entry name" value="ATP-grasp fold, A domain"/>
    <property type="match status" value="1"/>
</dbReference>
<dbReference type="Gene3D" id="3.30.470.20">
    <property type="entry name" value="ATP-grasp fold, B domain"/>
    <property type="match status" value="1"/>
</dbReference>
<dbReference type="HAMAP" id="MF_00047">
    <property type="entry name" value="Dala_Dala_lig"/>
    <property type="match status" value="1"/>
</dbReference>
<dbReference type="InterPro" id="IPR011761">
    <property type="entry name" value="ATP-grasp"/>
</dbReference>
<dbReference type="InterPro" id="IPR013815">
    <property type="entry name" value="ATP_grasp_subdomain_1"/>
</dbReference>
<dbReference type="InterPro" id="IPR000291">
    <property type="entry name" value="D-Ala_lig_Van_CS"/>
</dbReference>
<dbReference type="InterPro" id="IPR005905">
    <property type="entry name" value="D_ala_D_ala"/>
</dbReference>
<dbReference type="InterPro" id="IPR011095">
    <property type="entry name" value="Dala_Dala_lig_C"/>
</dbReference>
<dbReference type="InterPro" id="IPR011127">
    <property type="entry name" value="Dala_Dala_lig_N"/>
</dbReference>
<dbReference type="InterPro" id="IPR016185">
    <property type="entry name" value="PreATP-grasp_dom_sf"/>
</dbReference>
<dbReference type="NCBIfam" id="TIGR01205">
    <property type="entry name" value="D_ala_D_alaTIGR"/>
    <property type="match status" value="1"/>
</dbReference>
<dbReference type="NCBIfam" id="NF002378">
    <property type="entry name" value="PRK01372.1"/>
    <property type="match status" value="1"/>
</dbReference>
<dbReference type="PANTHER" id="PTHR23132">
    <property type="entry name" value="D-ALANINE--D-ALANINE LIGASE"/>
    <property type="match status" value="1"/>
</dbReference>
<dbReference type="PANTHER" id="PTHR23132:SF23">
    <property type="entry name" value="D-ALANINE--D-ALANINE LIGASE B"/>
    <property type="match status" value="1"/>
</dbReference>
<dbReference type="Pfam" id="PF07478">
    <property type="entry name" value="Dala_Dala_lig_C"/>
    <property type="match status" value="1"/>
</dbReference>
<dbReference type="Pfam" id="PF01820">
    <property type="entry name" value="Dala_Dala_lig_N"/>
    <property type="match status" value="1"/>
</dbReference>
<dbReference type="PIRSF" id="PIRSF039102">
    <property type="entry name" value="Ddl/VanB"/>
    <property type="match status" value="1"/>
</dbReference>
<dbReference type="SUPFAM" id="SSF56059">
    <property type="entry name" value="Glutathione synthetase ATP-binding domain-like"/>
    <property type="match status" value="1"/>
</dbReference>
<dbReference type="SUPFAM" id="SSF52440">
    <property type="entry name" value="PreATP-grasp domain"/>
    <property type="match status" value="1"/>
</dbReference>
<dbReference type="PROSITE" id="PS50975">
    <property type="entry name" value="ATP_GRASP"/>
    <property type="match status" value="1"/>
</dbReference>
<dbReference type="PROSITE" id="PS00843">
    <property type="entry name" value="DALA_DALA_LIGASE_1"/>
    <property type="match status" value="1"/>
</dbReference>
<dbReference type="PROSITE" id="PS00844">
    <property type="entry name" value="DALA_DALA_LIGASE_2"/>
    <property type="match status" value="1"/>
</dbReference>
<organism>
    <name type="scientific">Sinorhizobium medicae (strain WSM419)</name>
    <name type="common">Ensifer medicae</name>
    <dbReference type="NCBI Taxonomy" id="366394"/>
    <lineage>
        <taxon>Bacteria</taxon>
        <taxon>Pseudomonadati</taxon>
        <taxon>Pseudomonadota</taxon>
        <taxon>Alphaproteobacteria</taxon>
        <taxon>Hyphomicrobiales</taxon>
        <taxon>Rhizobiaceae</taxon>
        <taxon>Sinorhizobium/Ensifer group</taxon>
        <taxon>Sinorhizobium</taxon>
    </lineage>
</organism>
<feature type="chain" id="PRO_1000030491" description="D-alanine--D-alanine ligase">
    <location>
        <begin position="1"/>
        <end position="308"/>
    </location>
</feature>
<feature type="domain" description="ATP-grasp" evidence="2">
    <location>
        <begin position="102"/>
        <end position="302"/>
    </location>
</feature>
<feature type="binding site" evidence="2">
    <location>
        <begin position="128"/>
        <end position="183"/>
    </location>
    <ligand>
        <name>ATP</name>
        <dbReference type="ChEBI" id="CHEBI:30616"/>
    </ligand>
</feature>
<feature type="binding site" evidence="2">
    <location>
        <position position="252"/>
    </location>
    <ligand>
        <name>Mg(2+)</name>
        <dbReference type="ChEBI" id="CHEBI:18420"/>
        <label>1</label>
    </ligand>
</feature>
<feature type="binding site" evidence="2">
    <location>
        <position position="269"/>
    </location>
    <ligand>
        <name>Mg(2+)</name>
        <dbReference type="ChEBI" id="CHEBI:18420"/>
        <label>1</label>
    </ligand>
</feature>
<feature type="binding site" evidence="2">
    <location>
        <position position="269"/>
    </location>
    <ligand>
        <name>Mg(2+)</name>
        <dbReference type="ChEBI" id="CHEBI:18420"/>
        <label>2</label>
    </ligand>
</feature>
<feature type="binding site" evidence="2">
    <location>
        <position position="271"/>
    </location>
    <ligand>
        <name>Mg(2+)</name>
        <dbReference type="ChEBI" id="CHEBI:18420"/>
        <label>2</label>
    </ligand>
</feature>